<gene>
    <name type="primary">LTB</name>
    <name type="synonym">TNFC</name>
    <name type="synonym">TNFSF3</name>
</gene>
<comment type="function">
    <text evidence="1">Cytokine that binds to LTBR/TNFRSF3. May play a specific role in immune response regulation. Provides the membrane anchor for the attachment of the heterotrimeric complex to the cell surface (By similarity).</text>
</comment>
<comment type="subunit">
    <text evidence="1">Heterotrimer of either two LTB and one LTA subunits or (less prevalent) two LTA and one LTB subunits.</text>
</comment>
<comment type="subcellular location">
    <subcellularLocation>
        <location evidence="4">Membrane</location>
        <topology evidence="4">Single-pass type II membrane protein</topology>
    </subcellularLocation>
</comment>
<comment type="similarity">
    <text evidence="4">Belongs to the tumor necrosis factor family.</text>
</comment>
<keyword id="KW-0202">Cytokine</keyword>
<keyword id="KW-0325">Glycoprotein</keyword>
<keyword id="KW-0472">Membrane</keyword>
<keyword id="KW-1185">Reference proteome</keyword>
<keyword id="KW-0735">Signal-anchor</keyword>
<keyword id="KW-0812">Transmembrane</keyword>
<keyword id="KW-1133">Transmembrane helix</keyword>
<protein>
    <recommendedName>
        <fullName>Lymphotoxin-beta</fullName>
        <shortName>LT-beta</shortName>
    </recommendedName>
    <alternativeName>
        <fullName>Tumor necrosis factor C</fullName>
        <shortName>TNF-C</shortName>
    </alternativeName>
    <alternativeName>
        <fullName>Tumor necrosis factor ligand superfamily member 3</fullName>
    </alternativeName>
</protein>
<feature type="chain" id="PRO_0000185491" description="Lymphotoxin-beta">
    <location>
        <begin position="1"/>
        <end position="244"/>
    </location>
</feature>
<feature type="topological domain" description="Cytoplasmic" evidence="2">
    <location>
        <begin position="1"/>
        <end position="18"/>
    </location>
</feature>
<feature type="transmembrane region" description="Helical; Signal-anchor for type II membrane protein" evidence="2">
    <location>
        <begin position="19"/>
        <end position="48"/>
    </location>
</feature>
<feature type="topological domain" description="Extracellular" evidence="2">
    <location>
        <begin position="49"/>
        <end position="244"/>
    </location>
</feature>
<feature type="domain" description="THD" evidence="3">
    <location>
        <begin position="88"/>
        <end position="243"/>
    </location>
</feature>
<feature type="glycosylation site" description="N-linked (GlcNAc...) asparagine" evidence="2">
    <location>
        <position position="222"/>
    </location>
</feature>
<evidence type="ECO:0000250" key="1"/>
<evidence type="ECO:0000255" key="2"/>
<evidence type="ECO:0000255" key="3">
    <source>
        <dbReference type="PROSITE-ProRule" id="PRU01387"/>
    </source>
</evidence>
<evidence type="ECO:0000305" key="4"/>
<organism>
    <name type="scientific">Pan troglodytes</name>
    <name type="common">Chimpanzee</name>
    <dbReference type="NCBI Taxonomy" id="9598"/>
    <lineage>
        <taxon>Eukaryota</taxon>
        <taxon>Metazoa</taxon>
        <taxon>Chordata</taxon>
        <taxon>Craniata</taxon>
        <taxon>Vertebrata</taxon>
        <taxon>Euteleostomi</taxon>
        <taxon>Mammalia</taxon>
        <taxon>Eutheria</taxon>
        <taxon>Euarchontoglires</taxon>
        <taxon>Primates</taxon>
        <taxon>Haplorrhini</taxon>
        <taxon>Catarrhini</taxon>
        <taxon>Hominidae</taxon>
        <taxon>Pan</taxon>
    </lineage>
</organism>
<accession>Q862Z7</accession>
<accession>Q1XHZ4</accession>
<dbReference type="EMBL" id="AB054536">
    <property type="protein sequence ID" value="BAB83881.1"/>
    <property type="molecule type" value="Genomic_DNA"/>
</dbReference>
<dbReference type="EMBL" id="BA000041">
    <property type="protein sequence ID" value="BAC78156.1"/>
    <property type="molecule type" value="Genomic_DNA"/>
</dbReference>
<dbReference type="EMBL" id="AB210168">
    <property type="protein sequence ID" value="BAE92776.1"/>
    <property type="molecule type" value="Genomic_DNA"/>
</dbReference>
<dbReference type="EMBL" id="AB210167">
    <property type="protein sequence ID" value="BAE92775.1"/>
    <property type="molecule type" value="Genomic_DNA"/>
</dbReference>
<dbReference type="RefSeq" id="NP_001070252.1">
    <property type="nucleotide sequence ID" value="NM_001076784.1"/>
</dbReference>
<dbReference type="SMR" id="Q862Z7"/>
<dbReference type="FunCoup" id="Q862Z7">
    <property type="interactions" value="359"/>
</dbReference>
<dbReference type="STRING" id="9598.ENSPTRP00000050396"/>
<dbReference type="GlyCosmos" id="Q862Z7">
    <property type="glycosylation" value="1 site, No reported glycans"/>
</dbReference>
<dbReference type="PaxDb" id="9598-ENSPTRP00000050396"/>
<dbReference type="Ensembl" id="ENSPTRT00000033177.4">
    <property type="protein sequence ID" value="ENSPTRP00000050396.1"/>
    <property type="gene ID" value="ENSPTRG00000017966.5"/>
</dbReference>
<dbReference type="GeneID" id="744486"/>
<dbReference type="KEGG" id="ptr:744486"/>
<dbReference type="CTD" id="4050"/>
<dbReference type="VGNC" id="VGNC:11107">
    <property type="gene designation" value="LTB"/>
</dbReference>
<dbReference type="eggNOG" id="ENOG502SMSQ">
    <property type="taxonomic scope" value="Eukaryota"/>
</dbReference>
<dbReference type="GeneTree" id="ENSGT01130000278318"/>
<dbReference type="HOGENOM" id="CLU_096531_0_0_1"/>
<dbReference type="InParanoid" id="Q862Z7"/>
<dbReference type="OMA" id="GAWMKGQ"/>
<dbReference type="OrthoDB" id="8111at9604"/>
<dbReference type="TreeFam" id="TF337780"/>
<dbReference type="Proteomes" id="UP000002277">
    <property type="component" value="Chromosome 6"/>
</dbReference>
<dbReference type="Bgee" id="ENSPTRG00000017966">
    <property type="expression patterns" value="Expressed in thymus and 16 other cell types or tissues"/>
</dbReference>
<dbReference type="GO" id="GO:0005615">
    <property type="term" value="C:extracellular space"/>
    <property type="evidence" value="ECO:0000318"/>
    <property type="project" value="GO_Central"/>
</dbReference>
<dbReference type="GO" id="GO:0016020">
    <property type="term" value="C:membrane"/>
    <property type="evidence" value="ECO:0007669"/>
    <property type="project" value="UniProtKB-SubCell"/>
</dbReference>
<dbReference type="GO" id="GO:0005125">
    <property type="term" value="F:cytokine activity"/>
    <property type="evidence" value="ECO:0000318"/>
    <property type="project" value="GO_Central"/>
</dbReference>
<dbReference type="GO" id="GO:0005164">
    <property type="term" value="F:tumor necrosis factor receptor binding"/>
    <property type="evidence" value="ECO:0007669"/>
    <property type="project" value="InterPro"/>
</dbReference>
<dbReference type="GO" id="GO:0007166">
    <property type="term" value="P:cell surface receptor signaling pathway"/>
    <property type="evidence" value="ECO:0000318"/>
    <property type="project" value="GO_Central"/>
</dbReference>
<dbReference type="GO" id="GO:0010467">
    <property type="term" value="P:gene expression"/>
    <property type="evidence" value="ECO:0007669"/>
    <property type="project" value="Ensembl"/>
</dbReference>
<dbReference type="GO" id="GO:0006955">
    <property type="term" value="P:immune response"/>
    <property type="evidence" value="ECO:0007669"/>
    <property type="project" value="InterPro"/>
</dbReference>
<dbReference type="GO" id="GO:0048535">
    <property type="term" value="P:lymph node development"/>
    <property type="evidence" value="ECO:0007669"/>
    <property type="project" value="Ensembl"/>
</dbReference>
<dbReference type="GO" id="GO:0043123">
    <property type="term" value="P:positive regulation of canonical NF-kappaB signal transduction"/>
    <property type="evidence" value="ECO:0000318"/>
    <property type="project" value="GO_Central"/>
</dbReference>
<dbReference type="GO" id="GO:2001238">
    <property type="term" value="P:positive regulation of extrinsic apoptotic signaling pathway"/>
    <property type="evidence" value="ECO:0000318"/>
    <property type="project" value="GO_Central"/>
</dbReference>
<dbReference type="GO" id="GO:0032735">
    <property type="term" value="P:positive regulation of interleukin-12 production"/>
    <property type="evidence" value="ECO:0007669"/>
    <property type="project" value="Ensembl"/>
</dbReference>
<dbReference type="GO" id="GO:0043588">
    <property type="term" value="P:skin development"/>
    <property type="evidence" value="ECO:0007669"/>
    <property type="project" value="Ensembl"/>
</dbReference>
<dbReference type="CDD" id="cd00184">
    <property type="entry name" value="TNF"/>
    <property type="match status" value="1"/>
</dbReference>
<dbReference type="FunFam" id="2.60.120.40:FF:000030">
    <property type="entry name" value="Lymphotoxin-beta"/>
    <property type="match status" value="1"/>
</dbReference>
<dbReference type="Gene3D" id="2.60.120.40">
    <property type="match status" value="1"/>
</dbReference>
<dbReference type="InterPro" id="IPR006053">
    <property type="entry name" value="TNF"/>
</dbReference>
<dbReference type="InterPro" id="IPR002961">
    <property type="entry name" value="TNF_C"/>
</dbReference>
<dbReference type="InterPro" id="IPR021184">
    <property type="entry name" value="TNF_CS"/>
</dbReference>
<dbReference type="InterPro" id="IPR006052">
    <property type="entry name" value="TNF_dom"/>
</dbReference>
<dbReference type="InterPro" id="IPR008983">
    <property type="entry name" value="Tumour_necrosis_fac-like_dom"/>
</dbReference>
<dbReference type="PANTHER" id="PTHR11471:SF29">
    <property type="entry name" value="LYMPHOTOXIN-BETA"/>
    <property type="match status" value="1"/>
</dbReference>
<dbReference type="PANTHER" id="PTHR11471">
    <property type="entry name" value="TUMOR NECROSIS FACTOR FAMILY MEMBER"/>
    <property type="match status" value="1"/>
</dbReference>
<dbReference type="Pfam" id="PF00229">
    <property type="entry name" value="TNF"/>
    <property type="match status" value="1"/>
</dbReference>
<dbReference type="PRINTS" id="PR01234">
    <property type="entry name" value="TNECROSISFCT"/>
</dbReference>
<dbReference type="PRINTS" id="PR01237">
    <property type="entry name" value="TNFC"/>
</dbReference>
<dbReference type="SMART" id="SM00207">
    <property type="entry name" value="TNF"/>
    <property type="match status" value="1"/>
</dbReference>
<dbReference type="SUPFAM" id="SSF49842">
    <property type="entry name" value="TNF-like"/>
    <property type="match status" value="1"/>
</dbReference>
<dbReference type="PROSITE" id="PS00251">
    <property type="entry name" value="THD_1"/>
    <property type="match status" value="1"/>
</dbReference>
<dbReference type="PROSITE" id="PS50049">
    <property type="entry name" value="THD_2"/>
    <property type="match status" value="1"/>
</dbReference>
<reference key="1">
    <citation type="journal article" date="2002" name="Immunol. Rev.">
        <title>Comparative genomic analysis of the MHC: the evolution of class I duplication blocks, diversity and complexity from shark to man.</title>
        <authorList>
            <person name="Kulski J.K."/>
            <person name="Shiina T."/>
            <person name="Anzai T."/>
            <person name="Kohara S."/>
            <person name="Inoko H."/>
        </authorList>
    </citation>
    <scope>NUCLEOTIDE SEQUENCE [GENOMIC DNA]</scope>
</reference>
<reference key="2">
    <citation type="journal article" date="2003" name="Proc. Natl. Acad. Sci. U.S.A.">
        <title>Comparative sequencing of human and chimpanzee MHC class I regions unveils insertions/deletions as the major path to genomic divergence.</title>
        <authorList>
            <person name="Anzai T."/>
            <person name="Shiina T."/>
            <person name="Kimura N."/>
            <person name="Yanagiya K."/>
            <person name="Kohara S."/>
            <person name="Shigenari A."/>
            <person name="Yamagata T."/>
            <person name="Kulski J.K."/>
            <person name="Naruse T.K."/>
            <person name="Fujimori Y."/>
            <person name="Fukuzumi Y."/>
            <person name="Yamazaki M."/>
            <person name="Tashiro H."/>
            <person name="Iwamoto C."/>
            <person name="Umehara Y."/>
            <person name="Imanishi T."/>
            <person name="Meyer A."/>
            <person name="Ikeo K."/>
            <person name="Gojobori T."/>
            <person name="Bahram S."/>
            <person name="Inoko H."/>
        </authorList>
    </citation>
    <scope>NUCLEOTIDE SEQUENCE [LARGE SCALE GENOMIC DNA]</scope>
</reference>
<reference key="3">
    <citation type="journal article" date="2006" name="Genetics">
        <title>Rapid evolution of major histocompatibility complex class I genes in primates generates new disease alleles in humans via hitchhiking diversity.</title>
        <authorList>
            <person name="Shiina T."/>
            <person name="Ota M."/>
            <person name="Shimizu S."/>
            <person name="Katsuyama Y."/>
            <person name="Hashimoto N."/>
            <person name="Takasu M."/>
            <person name="Anzai T."/>
            <person name="Kulski J.K."/>
            <person name="Kikkawa E."/>
            <person name="Naruse T."/>
            <person name="Kimura N."/>
            <person name="Yanagiya K."/>
            <person name="Watanabe A."/>
            <person name="Hosomichi K."/>
            <person name="Kohara S."/>
            <person name="Iwamoto C."/>
            <person name="Umehara Y."/>
            <person name="Meyer A."/>
            <person name="Wanner V."/>
            <person name="Sano K."/>
            <person name="Macquin C."/>
            <person name="Ikeo K."/>
            <person name="Tokunaga K."/>
            <person name="Gojobori T."/>
            <person name="Inoko H."/>
            <person name="Bahram S."/>
        </authorList>
    </citation>
    <scope>NUCLEOTIDE SEQUENCE [LARGE SCALE GENOMIC DNA]</scope>
</reference>
<proteinExistence type="inferred from homology"/>
<name>TNFC_PANTR</name>
<sequence length="244" mass="25420">MGALGLEGRGGRLQGRGSLLLAVAGATSLVTLLLAVPITVLAVLALVPQDQGGLVTETADPGAQAQQGLGFQKLPEEEPETDLSPGLPAAHLIGAPLKGQGLGWETTKEQAFLTSGTQFSDAEGLALPQDGLYYLYCLVGYRGRTPPGGGDPQGRSVTLRSSLYRAGGAYGPGTPELLLEGAETVTPVLDPARRQGYGPLWYTSVGFGGLVQLRRGERVYVNISHPDMVDFARGKTFFGAVMVG</sequence>